<dbReference type="EMBL" id="D63765">
    <property type="protein sequence ID" value="BAA09845.1"/>
    <property type="molecule type" value="Genomic_DNA"/>
</dbReference>
<dbReference type="RefSeq" id="WP_024259501.1">
    <property type="nucleotide sequence ID" value="NZ_UAUQ01000007.1"/>
</dbReference>
<dbReference type="InterPro" id="IPR019294">
    <property type="entry name" value="Translation_reg_Com"/>
</dbReference>
<dbReference type="Pfam" id="PF10122">
    <property type="entry name" value="Zn_ribbon_Com"/>
    <property type="match status" value="1"/>
</dbReference>
<sequence length="62" mass="7361">MKSIRCKNCNKLLFKADSFDHIEIRCPRCKRHIIMLNACEHPTEKHCGKREKITHSDETVCY</sequence>
<evidence type="ECO:0000305" key="1"/>
<reference key="1">
    <citation type="journal article" date="1997" name="Microbiology">
        <title>The site-specific recombinase encoded by pinD in Shigella dysenteriae is due to the presence of a defective Mu prophage.</title>
        <authorList>
            <person name="Tominaga A."/>
        </authorList>
    </citation>
    <scope>NUCLEOTIDE SEQUENCE [GENOMIC DNA]</scope>
    <source>
        <strain>Sh16</strain>
    </source>
</reference>
<proteinExistence type="inferred from homology"/>
<name>VCOM_SHIDY</name>
<comment type="similarity">
    <text evidence="1">Belongs to the com family.</text>
</comment>
<feature type="chain" id="PRO_0000077662" description="Cryptic Mu-phage protein com">
    <location>
        <begin position="1"/>
        <end position="62"/>
    </location>
</feature>
<organism>
    <name type="scientific">Shigella dysenteriae</name>
    <dbReference type="NCBI Taxonomy" id="622"/>
    <lineage>
        <taxon>Bacteria</taxon>
        <taxon>Pseudomonadati</taxon>
        <taxon>Pseudomonadota</taxon>
        <taxon>Gammaproteobacteria</taxon>
        <taxon>Enterobacterales</taxon>
        <taxon>Enterobacteriaceae</taxon>
        <taxon>Shigella</taxon>
    </lineage>
</organism>
<protein>
    <recommendedName>
        <fullName>Cryptic Mu-phage protein com</fullName>
    </recommendedName>
</protein>
<accession>Q53979</accession>